<comment type="function">
    <text>Catalyzes the second step in the formation of the mannose 6-phosphate targeting signal on lysosomal enzyme oligosaccharides by removing GlcNAc residues from GlcNAc-alpha-P-mannose moieties, which are formed in the first step. Also hydrolyzes UDP-GlcNAc, a sugar donor for Golgi N-acetylglucosaminyltransferases.</text>
</comment>
<comment type="catalytic activity">
    <reaction>
        <text>N(4)-[6-(N-acetyl-alpha-D-glucosaminyl-1-phospho)-alpha-D-mannosyl-(1-&gt;2)-alpha-D-mannosyl-(glycan)]-L-asparaginyl-[protein] + H2O = N(4)-[6-phospho-alpha-D-mannosyl-(1-&gt;2)-alpha-D-mannosyl-(glycan)]-L-asparaginyl-[protein] + N-acetyl-D-glucosamine + H(+)</text>
        <dbReference type="Rhea" id="RHEA:24372"/>
        <dbReference type="Rhea" id="RHEA-COMP:14508"/>
        <dbReference type="Rhea" id="RHEA-COMP:14509"/>
        <dbReference type="ChEBI" id="CHEBI:15377"/>
        <dbReference type="ChEBI" id="CHEBI:15378"/>
        <dbReference type="ChEBI" id="CHEBI:140369"/>
        <dbReference type="ChEBI" id="CHEBI:140371"/>
        <dbReference type="ChEBI" id="CHEBI:506227"/>
        <dbReference type="EC" id="3.1.4.45"/>
    </reaction>
</comment>
<comment type="pathway">
    <text>Protein modification; protein glycosylation.</text>
</comment>
<comment type="subunit">
    <text evidence="2 3">Homotetramer arranged as two disulfide-linked homodimers. Interacts with AP4M1.</text>
</comment>
<comment type="subcellular location">
    <subcellularLocation>
        <location>Golgi apparatus</location>
        <location>Golgi stack membrane</location>
        <topology>Single-pass type I membrane protein</topology>
    </subcellularLocation>
    <subcellularLocation>
        <location evidence="1">Golgi apparatus</location>
        <location evidence="1">trans-Golgi network</location>
    </subcellularLocation>
    <text>Cis/medial Golgi.</text>
</comment>
<comment type="domain">
    <text>The tyrosine-based internalization signal may be essential for its retrieval from the plasma membrane to the TGN.</text>
</comment>
<comment type="domain">
    <text>The C-terminal NPFKD sequence is an attractive candidate for either an endocytosis signal acting at the plasma membrane or a retrieval signal acting at the TGN to return the enzyme to the cis/medial-Golgi.</text>
</comment>
<comment type="PTM">
    <text evidence="1">The precursor is cleaved and activated in the trans-Golgi network by a furin endopeptidase.</text>
</comment>
<reference key="1">
    <citation type="journal article" date="2005" name="Science">
        <title>The transcriptional landscape of the mammalian genome.</title>
        <authorList>
            <person name="Carninci P."/>
            <person name="Kasukawa T."/>
            <person name="Katayama S."/>
            <person name="Gough J."/>
            <person name="Frith M.C."/>
            <person name="Maeda N."/>
            <person name="Oyama R."/>
            <person name="Ravasi T."/>
            <person name="Lenhard B."/>
            <person name="Wells C."/>
            <person name="Kodzius R."/>
            <person name="Shimokawa K."/>
            <person name="Bajic V.B."/>
            <person name="Brenner S.E."/>
            <person name="Batalov S."/>
            <person name="Forrest A.R."/>
            <person name="Zavolan M."/>
            <person name="Davis M.J."/>
            <person name="Wilming L.G."/>
            <person name="Aidinis V."/>
            <person name="Allen J.E."/>
            <person name="Ambesi-Impiombato A."/>
            <person name="Apweiler R."/>
            <person name="Aturaliya R.N."/>
            <person name="Bailey T.L."/>
            <person name="Bansal M."/>
            <person name="Baxter L."/>
            <person name="Beisel K.W."/>
            <person name="Bersano T."/>
            <person name="Bono H."/>
            <person name="Chalk A.M."/>
            <person name="Chiu K.P."/>
            <person name="Choudhary V."/>
            <person name="Christoffels A."/>
            <person name="Clutterbuck D.R."/>
            <person name="Crowe M.L."/>
            <person name="Dalla E."/>
            <person name="Dalrymple B.P."/>
            <person name="de Bono B."/>
            <person name="Della Gatta G."/>
            <person name="di Bernardo D."/>
            <person name="Down T."/>
            <person name="Engstrom P."/>
            <person name="Fagiolini M."/>
            <person name="Faulkner G."/>
            <person name="Fletcher C.F."/>
            <person name="Fukushima T."/>
            <person name="Furuno M."/>
            <person name="Futaki S."/>
            <person name="Gariboldi M."/>
            <person name="Georgii-Hemming P."/>
            <person name="Gingeras T.R."/>
            <person name="Gojobori T."/>
            <person name="Green R.E."/>
            <person name="Gustincich S."/>
            <person name="Harbers M."/>
            <person name="Hayashi Y."/>
            <person name="Hensch T.K."/>
            <person name="Hirokawa N."/>
            <person name="Hill D."/>
            <person name="Huminiecki L."/>
            <person name="Iacono M."/>
            <person name="Ikeo K."/>
            <person name="Iwama A."/>
            <person name="Ishikawa T."/>
            <person name="Jakt M."/>
            <person name="Kanapin A."/>
            <person name="Katoh M."/>
            <person name="Kawasawa Y."/>
            <person name="Kelso J."/>
            <person name="Kitamura H."/>
            <person name="Kitano H."/>
            <person name="Kollias G."/>
            <person name="Krishnan S.P."/>
            <person name="Kruger A."/>
            <person name="Kummerfeld S.K."/>
            <person name="Kurochkin I.V."/>
            <person name="Lareau L.F."/>
            <person name="Lazarevic D."/>
            <person name="Lipovich L."/>
            <person name="Liu J."/>
            <person name="Liuni S."/>
            <person name="McWilliam S."/>
            <person name="Madan Babu M."/>
            <person name="Madera M."/>
            <person name="Marchionni L."/>
            <person name="Matsuda H."/>
            <person name="Matsuzawa S."/>
            <person name="Miki H."/>
            <person name="Mignone F."/>
            <person name="Miyake S."/>
            <person name="Morris K."/>
            <person name="Mottagui-Tabar S."/>
            <person name="Mulder N."/>
            <person name="Nakano N."/>
            <person name="Nakauchi H."/>
            <person name="Ng P."/>
            <person name="Nilsson R."/>
            <person name="Nishiguchi S."/>
            <person name="Nishikawa S."/>
            <person name="Nori F."/>
            <person name="Ohara O."/>
            <person name="Okazaki Y."/>
            <person name="Orlando V."/>
            <person name="Pang K.C."/>
            <person name="Pavan W.J."/>
            <person name="Pavesi G."/>
            <person name="Pesole G."/>
            <person name="Petrovsky N."/>
            <person name="Piazza S."/>
            <person name="Reed J."/>
            <person name="Reid J.F."/>
            <person name="Ring B.Z."/>
            <person name="Ringwald M."/>
            <person name="Rost B."/>
            <person name="Ruan Y."/>
            <person name="Salzberg S.L."/>
            <person name="Sandelin A."/>
            <person name="Schneider C."/>
            <person name="Schoenbach C."/>
            <person name="Sekiguchi K."/>
            <person name="Semple C.A."/>
            <person name="Seno S."/>
            <person name="Sessa L."/>
            <person name="Sheng Y."/>
            <person name="Shibata Y."/>
            <person name="Shimada H."/>
            <person name="Shimada K."/>
            <person name="Silva D."/>
            <person name="Sinclair B."/>
            <person name="Sperling S."/>
            <person name="Stupka E."/>
            <person name="Sugiura K."/>
            <person name="Sultana R."/>
            <person name="Takenaka Y."/>
            <person name="Taki K."/>
            <person name="Tammoja K."/>
            <person name="Tan S.L."/>
            <person name="Tang S."/>
            <person name="Taylor M.S."/>
            <person name="Tegner J."/>
            <person name="Teichmann S.A."/>
            <person name="Ueda H.R."/>
            <person name="van Nimwegen E."/>
            <person name="Verardo R."/>
            <person name="Wei C.L."/>
            <person name="Yagi K."/>
            <person name="Yamanishi H."/>
            <person name="Zabarovsky E."/>
            <person name="Zhu S."/>
            <person name="Zimmer A."/>
            <person name="Hide W."/>
            <person name="Bult C."/>
            <person name="Grimmond S.M."/>
            <person name="Teasdale R.D."/>
            <person name="Liu E.T."/>
            <person name="Brusic V."/>
            <person name="Quackenbush J."/>
            <person name="Wahlestedt C."/>
            <person name="Mattick J.S."/>
            <person name="Hume D.A."/>
            <person name="Kai C."/>
            <person name="Sasaki D."/>
            <person name="Tomaru Y."/>
            <person name="Fukuda S."/>
            <person name="Kanamori-Katayama M."/>
            <person name="Suzuki M."/>
            <person name="Aoki J."/>
            <person name="Arakawa T."/>
            <person name="Iida J."/>
            <person name="Imamura K."/>
            <person name="Itoh M."/>
            <person name="Kato T."/>
            <person name="Kawaji H."/>
            <person name="Kawagashira N."/>
            <person name="Kawashima T."/>
            <person name="Kojima M."/>
            <person name="Kondo S."/>
            <person name="Konno H."/>
            <person name="Nakano K."/>
            <person name="Ninomiya N."/>
            <person name="Nishio T."/>
            <person name="Okada M."/>
            <person name="Plessy C."/>
            <person name="Shibata K."/>
            <person name="Shiraki T."/>
            <person name="Suzuki S."/>
            <person name="Tagami M."/>
            <person name="Waki K."/>
            <person name="Watahiki A."/>
            <person name="Okamura-Oho Y."/>
            <person name="Suzuki H."/>
            <person name="Kawai J."/>
            <person name="Hayashizaki Y."/>
        </authorList>
    </citation>
    <scope>NUCLEOTIDE SEQUENCE [LARGE SCALE MRNA]</scope>
    <source>
        <strain>C57BL/6J</strain>
        <tissue>Brain</tissue>
        <tissue>Thymus</tissue>
    </source>
</reference>
<reference key="2">
    <citation type="journal article" date="2004" name="Genome Res.">
        <title>The status, quality, and expansion of the NIH full-length cDNA project: the Mammalian Gene Collection (MGC).</title>
        <authorList>
            <consortium name="The MGC Project Team"/>
        </authorList>
    </citation>
    <scope>NUCLEOTIDE SEQUENCE [LARGE SCALE MRNA]</scope>
    <source>
        <strain>FVB/N</strain>
        <tissue>Mammary gland</tissue>
    </source>
</reference>
<reference key="3">
    <citation type="journal article" date="1999" name="J. Biol. Chem.">
        <title>Molecular cloning and functional expression of two splice forms of human N-acetylglucosamine-1-phosphodiester alpha-N-acetylglucosaminidase.</title>
        <authorList>
            <person name="Kornfeld R.H."/>
            <person name="Bao M."/>
            <person name="Brewer K."/>
            <person name="Noll C."/>
            <person name="Canfield W.M."/>
        </authorList>
    </citation>
    <scope>NUCLEOTIDE SEQUENCE [GENOMIC DNA] OF 30-517</scope>
</reference>
<reference key="4">
    <citation type="journal article" date="2010" name="Cell">
        <title>A tissue-specific atlas of mouse protein phosphorylation and expression.</title>
        <authorList>
            <person name="Huttlin E.L."/>
            <person name="Jedrychowski M.P."/>
            <person name="Elias J.E."/>
            <person name="Goswami T."/>
            <person name="Rad R."/>
            <person name="Beausoleil S.A."/>
            <person name="Villen J."/>
            <person name="Haas W."/>
            <person name="Sowa M.E."/>
            <person name="Gygi S.P."/>
        </authorList>
    </citation>
    <scope>IDENTIFICATION BY MASS SPECTROMETRY [LARGE SCALE ANALYSIS]</scope>
    <source>
        <tissue>Heart</tissue>
    </source>
</reference>
<organism>
    <name type="scientific">Mus musculus</name>
    <name type="common">Mouse</name>
    <dbReference type="NCBI Taxonomy" id="10090"/>
    <lineage>
        <taxon>Eukaryota</taxon>
        <taxon>Metazoa</taxon>
        <taxon>Chordata</taxon>
        <taxon>Craniata</taxon>
        <taxon>Vertebrata</taxon>
        <taxon>Euteleostomi</taxon>
        <taxon>Mammalia</taxon>
        <taxon>Eutheria</taxon>
        <taxon>Euarchontoglires</taxon>
        <taxon>Glires</taxon>
        <taxon>Rodentia</taxon>
        <taxon>Myomorpha</taxon>
        <taxon>Muroidea</taxon>
        <taxon>Muridae</taxon>
        <taxon>Murinae</taxon>
        <taxon>Mus</taxon>
        <taxon>Mus</taxon>
    </lineage>
</organism>
<protein>
    <recommendedName>
        <fullName>N-acetylglucosamine-1-phosphodiester alpha-N-acetylglucosaminidase</fullName>
        <ecNumber>3.1.4.45</ecNumber>
    </recommendedName>
    <alternativeName>
        <fullName>Mannose 6-phosphate-uncovering enzyme</fullName>
    </alternativeName>
    <alternativeName>
        <fullName>Phosphodiester alpha-GlcNAcase</fullName>
    </alternativeName>
</protein>
<name>NAGPA_MOUSE</name>
<accession>Q8BJ48</accession>
<accession>Q3UUT5</accession>
<accession>Q8CHQ8</accession>
<accession>Q9QZE6</accession>
<keyword id="KW-1015">Disulfide bond</keyword>
<keyword id="KW-0245">EGF-like domain</keyword>
<keyword id="KW-0325">Glycoprotein</keyword>
<keyword id="KW-0333">Golgi apparatus</keyword>
<keyword id="KW-0378">Hydrolase</keyword>
<keyword id="KW-0472">Membrane</keyword>
<keyword id="KW-1185">Reference proteome</keyword>
<keyword id="KW-0732">Signal</keyword>
<keyword id="KW-0812">Transmembrane</keyword>
<keyword id="KW-1133">Transmembrane helix</keyword>
<keyword id="KW-0865">Zymogen</keyword>
<feature type="signal peptide" evidence="1">
    <location>
        <begin position="1"/>
        <end position="25"/>
    </location>
</feature>
<feature type="propeptide" id="PRO_0000424660" description="Removed in mature form" evidence="1">
    <location>
        <begin position="26"/>
        <end position="49"/>
    </location>
</feature>
<feature type="chain" id="PRO_0000021789" description="N-acetylglucosamine-1-phosphodiester alpha-N-acetylglucosaminidase">
    <location>
        <begin position="50"/>
        <end position="517"/>
    </location>
</feature>
<feature type="topological domain" description="Lumenal" evidence="4">
    <location>
        <begin position="50"/>
        <end position="453"/>
    </location>
</feature>
<feature type="transmembrane region" description="Helical" evidence="4">
    <location>
        <begin position="454"/>
        <end position="474"/>
    </location>
</feature>
<feature type="topological domain" description="Cytoplasmic" evidence="4">
    <location>
        <begin position="475"/>
        <end position="517"/>
    </location>
</feature>
<feature type="domain" description="EGF-like">
    <location>
        <begin position="359"/>
        <end position="391"/>
    </location>
</feature>
<feature type="region of interest" description="Disordered" evidence="5">
    <location>
        <begin position="49"/>
        <end position="75"/>
    </location>
</feature>
<feature type="region of interest" description="Mediates the interaction with AP4M1" evidence="3">
    <location>
        <begin position="488"/>
        <end position="495"/>
    </location>
</feature>
<feature type="short sequence motif" description="Tyrosine-based internalization motif">
    <location>
        <begin position="488"/>
        <end position="491"/>
    </location>
</feature>
<feature type="short sequence motif" description="NPF internalization motif">
    <location>
        <begin position="511"/>
        <end position="515"/>
    </location>
</feature>
<feature type="glycosylation site" description="N-linked (GlcNAc...) asparagine" evidence="4">
    <location>
        <position position="215"/>
    </location>
</feature>
<feature type="glycosylation site" description="N-linked (GlcNAc...) asparagine" evidence="4">
    <location>
        <position position="297"/>
    </location>
</feature>
<feature type="glycosylation site" description="N-linked (GlcNAc...) asparagine" evidence="4">
    <location>
        <position position="367"/>
    </location>
</feature>
<feature type="glycosylation site" description="N-linked (GlcNAc...) asparagine" evidence="4">
    <location>
        <position position="389"/>
    </location>
</feature>
<feature type="glycosylation site" description="N-linked (GlcNAc...) asparagine" evidence="4">
    <location>
        <position position="421"/>
    </location>
</feature>
<feature type="disulfide bond" evidence="1">
    <location>
        <begin position="116"/>
        <end position="149"/>
    </location>
</feature>
<feature type="disulfide bond" evidence="1">
    <location>
        <begin position="133"/>
        <end position="324"/>
    </location>
</feature>
<feature type="disulfide bond" evidence="1">
    <location>
        <begin position="308"/>
        <end position="315"/>
    </location>
</feature>
<feature type="disulfide bond" evidence="1">
    <location>
        <begin position="363"/>
        <end position="374"/>
    </location>
</feature>
<feature type="disulfide bond" evidence="1">
    <location>
        <begin position="381"/>
        <end position="390"/>
    </location>
</feature>
<feature type="sequence conflict" description="In Ref. 3; AAF08274." evidence="6" ref="3">
    <original>TNPGA</original>
    <variation>LATHEPRAP</variation>
    <location>
        <begin position="69"/>
        <end position="73"/>
    </location>
</feature>
<feature type="sequence conflict" description="In Ref. 3; AAF08274." evidence="6" ref="3">
    <original>AQKRR</original>
    <variation>GGRSAA</variation>
    <location>
        <begin position="117"/>
        <end position="121"/>
    </location>
</feature>
<feature type="sequence conflict" description="In Ref. 3; AAF08274." evidence="6" ref="3">
    <original>P</original>
    <variation>R</variation>
    <location>
        <position position="130"/>
    </location>
</feature>
<feature type="sequence conflict" description="In Ref. 3; AAF08274." evidence="6" ref="3">
    <original>YLS</original>
    <variation>SCL</variation>
    <location>
        <begin position="183"/>
        <end position="185"/>
    </location>
</feature>
<feature type="sequence conflict" description="In Ref. 3; AAF08274." evidence="6" ref="3">
    <original>G</original>
    <variation>GD</variation>
    <location>
        <position position="265"/>
    </location>
</feature>
<feature type="sequence conflict" description="In Ref. 1; BAC27731." evidence="6" ref="1">
    <original>T</original>
    <variation>N</variation>
    <location>
        <position position="349"/>
    </location>
</feature>
<feature type="sequence conflict" description="In Ref. 3; AAF08274." evidence="6" ref="3">
    <original>S</original>
    <variation>F</variation>
    <location>
        <position position="414"/>
    </location>
</feature>
<feature type="sequence conflict" description="In Ref. 2; AAH39790." evidence="6" ref="2">
    <original>M</original>
    <variation>T</variation>
    <location>
        <position position="508"/>
    </location>
</feature>
<evidence type="ECO:0000250" key="1"/>
<evidence type="ECO:0000250" key="2">
    <source>
        <dbReference type="UniProtKB" id="P68827"/>
    </source>
</evidence>
<evidence type="ECO:0000250" key="3">
    <source>
        <dbReference type="UniProtKB" id="Q9UK23"/>
    </source>
</evidence>
<evidence type="ECO:0000255" key="4"/>
<evidence type="ECO:0000256" key="5">
    <source>
        <dbReference type="SAM" id="MobiDB-lite"/>
    </source>
</evidence>
<evidence type="ECO:0000305" key="6"/>
<sequence>MAAPRGPGLFLIPALLGLLGVAWCSLSFGVSRDDDLLLPYPLARRRPSRDCARVRSGSPEQESWPPPPTNPGASHHAAVRTFVSHFEGRAVAGHLTRVADPLRTFSVLEPGGAGGCAQKRRATVEDTAVPAGCRIAQNGGFFRMSTGECLGNVVSDGRLVSSSGGLQNAQFGIRRDGTIVTGYLSEEEVLDPVNPFVQLLSGVVWLIRNGNIYINESQAIECDETQETGSFSKFVNVMSARTAVGHDREGQLILFHADGQTEQRGLNLWEMAEFLRQQDVVNAINLDGGGSATFVLNGTLASYPSDHCQDNMWRCPRQVSTVVCVHEPRCQPPDCSGHGTCVDGHCECTSHFWRGEACSELDCGPSNCSQHGLCTETGCHCDAGWTGSNCSEECPLGWYGPGCQRPCQCEHQCSCDPQTGNCSISQVRQCLQPTEATPRAGELASFTRTTWLALTLTLIFLLLISTGVNVSLFLGSRAERNRHLDGDYVYHPLQEVNGEALTAEKEHMEETSNPFKD</sequence>
<dbReference type="EC" id="3.1.4.45"/>
<dbReference type="EMBL" id="AK032158">
    <property type="protein sequence ID" value="BAC27731.1"/>
    <property type="molecule type" value="mRNA"/>
</dbReference>
<dbReference type="EMBL" id="AK138035">
    <property type="protein sequence ID" value="BAE23539.1"/>
    <property type="molecule type" value="mRNA"/>
</dbReference>
<dbReference type="EMBL" id="BC039790">
    <property type="protein sequence ID" value="AAH39790.1"/>
    <property type="molecule type" value="mRNA"/>
</dbReference>
<dbReference type="EMBL" id="AF187073">
    <property type="protein sequence ID" value="AAF08274.1"/>
    <property type="molecule type" value="Genomic_DNA"/>
</dbReference>
<dbReference type="CCDS" id="CCDS27933.1"/>
<dbReference type="RefSeq" id="NP_038824.2">
    <property type="nucleotide sequence ID" value="NM_013796.3"/>
</dbReference>
<dbReference type="SMR" id="Q8BJ48"/>
<dbReference type="FunCoup" id="Q8BJ48">
    <property type="interactions" value="801"/>
</dbReference>
<dbReference type="STRING" id="10090.ENSMUSP00000023911"/>
<dbReference type="GlyCosmos" id="Q8BJ48">
    <property type="glycosylation" value="5 sites, No reported glycans"/>
</dbReference>
<dbReference type="GlyGen" id="Q8BJ48">
    <property type="glycosylation" value="5 sites"/>
</dbReference>
<dbReference type="PhosphoSitePlus" id="Q8BJ48"/>
<dbReference type="SwissPalm" id="Q8BJ48"/>
<dbReference type="jPOST" id="Q8BJ48"/>
<dbReference type="PaxDb" id="10090-ENSMUSP00000023911"/>
<dbReference type="ProteomicsDB" id="252761"/>
<dbReference type="Pumba" id="Q8BJ48"/>
<dbReference type="Antibodypedia" id="24469">
    <property type="antibodies" value="31 antibodies from 13 providers"/>
</dbReference>
<dbReference type="DNASU" id="27426"/>
<dbReference type="Ensembl" id="ENSMUST00000023911.11">
    <property type="protein sequence ID" value="ENSMUSP00000023911.5"/>
    <property type="gene ID" value="ENSMUSG00000023143.11"/>
</dbReference>
<dbReference type="GeneID" id="27426"/>
<dbReference type="KEGG" id="mmu:27426"/>
<dbReference type="UCSC" id="uc007ybv.2">
    <property type="organism name" value="mouse"/>
</dbReference>
<dbReference type="AGR" id="MGI:1351598"/>
<dbReference type="CTD" id="51172"/>
<dbReference type="MGI" id="MGI:1351598">
    <property type="gene designation" value="Nagpa"/>
</dbReference>
<dbReference type="VEuPathDB" id="HostDB:ENSMUSG00000023143"/>
<dbReference type="eggNOG" id="ENOG502QRY5">
    <property type="taxonomic scope" value="Eukaryota"/>
</dbReference>
<dbReference type="GeneTree" id="ENSGT01030000234566"/>
<dbReference type="HOGENOM" id="CLU_031673_1_0_1"/>
<dbReference type="InParanoid" id="Q8BJ48"/>
<dbReference type="OMA" id="RPCKCEH"/>
<dbReference type="OrthoDB" id="192253at2759"/>
<dbReference type="PhylomeDB" id="Q8BJ48"/>
<dbReference type="TreeFam" id="TF331920"/>
<dbReference type="UniPathway" id="UPA00378"/>
<dbReference type="BioGRID-ORCS" id="27426">
    <property type="hits" value="4 hits in 77 CRISPR screens"/>
</dbReference>
<dbReference type="PRO" id="PR:Q8BJ48"/>
<dbReference type="Proteomes" id="UP000000589">
    <property type="component" value="Chromosome 16"/>
</dbReference>
<dbReference type="RNAct" id="Q8BJ48">
    <property type="molecule type" value="protein"/>
</dbReference>
<dbReference type="Bgee" id="ENSMUSG00000023143">
    <property type="expression patterns" value="Expressed in interventricular septum and 167 other cell types or tissues"/>
</dbReference>
<dbReference type="ExpressionAtlas" id="Q8BJ48">
    <property type="expression patterns" value="baseline and differential"/>
</dbReference>
<dbReference type="GO" id="GO:0032580">
    <property type="term" value="C:Golgi cisterna membrane"/>
    <property type="evidence" value="ECO:0007669"/>
    <property type="project" value="UniProtKB-SubCell"/>
</dbReference>
<dbReference type="GO" id="GO:0003944">
    <property type="term" value="F:N-acetylglucosamine-1-phosphodiester alpha-N-acetylglucosaminidase activity"/>
    <property type="evidence" value="ECO:0007669"/>
    <property type="project" value="UniProtKB-EC"/>
</dbReference>
<dbReference type="GO" id="GO:0006486">
    <property type="term" value="P:protein glycosylation"/>
    <property type="evidence" value="ECO:0007669"/>
    <property type="project" value="UniProtKB-UniPathway"/>
</dbReference>
<dbReference type="GO" id="GO:0033299">
    <property type="term" value="P:secretion of lysosomal enzymes"/>
    <property type="evidence" value="ECO:0000315"/>
    <property type="project" value="MGI"/>
</dbReference>
<dbReference type="Gene3D" id="2.170.300.10">
    <property type="entry name" value="Tie2 ligand-binding domain superfamily"/>
    <property type="match status" value="1"/>
</dbReference>
<dbReference type="InterPro" id="IPR000742">
    <property type="entry name" value="EGF-like_dom"/>
</dbReference>
<dbReference type="InterPro" id="IPR018711">
    <property type="entry name" value="NAGPA"/>
</dbReference>
<dbReference type="PANTHER" id="PTHR40446">
    <property type="entry name" value="N-ACETYLGLUCOSAMINE-1-PHOSPHODIESTER ALPHA-N-ACETYLGLUCOSAMINIDASE"/>
    <property type="match status" value="1"/>
</dbReference>
<dbReference type="PANTHER" id="PTHR40446:SF2">
    <property type="entry name" value="N-ACETYLGLUCOSAMINE-1-PHOSPHODIESTER ALPHA-N-ACETYLGLUCOSAMINIDASE"/>
    <property type="match status" value="1"/>
</dbReference>
<dbReference type="Pfam" id="PF23106">
    <property type="entry name" value="EGF_Teneurin"/>
    <property type="match status" value="1"/>
</dbReference>
<dbReference type="Pfam" id="PF09992">
    <property type="entry name" value="NAGPA"/>
    <property type="match status" value="1"/>
</dbReference>
<dbReference type="PROSITE" id="PS00022">
    <property type="entry name" value="EGF_1"/>
    <property type="match status" value="1"/>
</dbReference>
<dbReference type="PROSITE" id="PS01186">
    <property type="entry name" value="EGF_2"/>
    <property type="match status" value="1"/>
</dbReference>
<gene>
    <name type="primary">Nagpa</name>
</gene>
<proteinExistence type="evidence at protein level"/>